<organism>
    <name type="scientific">Pyrococcus horikoshii (strain ATCC 700860 / DSM 12428 / JCM 9974 / NBRC 100139 / OT-3)</name>
    <dbReference type="NCBI Taxonomy" id="70601"/>
    <lineage>
        <taxon>Archaea</taxon>
        <taxon>Methanobacteriati</taxon>
        <taxon>Methanobacteriota</taxon>
        <taxon>Thermococci</taxon>
        <taxon>Thermococcales</taxon>
        <taxon>Thermococcaceae</taxon>
        <taxon>Pyrococcus</taxon>
    </lineage>
</organism>
<keyword id="KW-0007">Acetylation</keyword>
<keyword id="KW-1003">Cell membrane</keyword>
<keyword id="KW-0449">Lipoprotein</keyword>
<keyword id="KW-0472">Membrane</keyword>
<keyword id="KW-0732">Signal</keyword>
<keyword id="KW-0813">Transport</keyword>
<evidence type="ECO:0000255" key="1"/>
<evidence type="ECO:0000255" key="2">
    <source>
        <dbReference type="PROSITE-ProRule" id="PRU00303"/>
    </source>
</evidence>
<evidence type="ECO:0000305" key="3"/>
<name>Y1214_PYRHO</name>
<proteinExistence type="inferred from homology"/>
<sequence length="441" mass="48896">MSRKYLLSLLLVGALVISVVASGCIGGSQTPTSSPTKTQQVQELEIYHWWTAGGEKEAFDALAKKFEKKYPNIKIKANPVSGGGGVNLKMVLQSLMLAGKPPDTFQVHAGYEMARYIKANQLTPIDDIWTEDMKKNYPKVIQQMVIFNNHYYAVPINVHRANVIWYNKQIFKKYGIDPSSIKTIDDLFAVAEKLKENGVTPFALGDRNKWPATQVFEVMLVAVGGVDYYEKFINGEISANDPTLKKVLEYFVKYVEYSNPDHAAKTWDEACALVYKGEAAMTLMGDWANGYFKAKGWKPNVDYGAIPIPAGVYDLVIDTFVLPAKAAHPNAAKKWLSFIGTVEAQNTFNPIKGSIPPRKDAPADPYDPIQKSFIKELSSSETKLIPSIAHGSAVPEAFLADLNDIISELATSKDVNKAATEIINAMKKDLLPNKIKEWHLS</sequence>
<feature type="signal peptide" evidence="2">
    <location>
        <begin position="1"/>
        <end position="23"/>
    </location>
</feature>
<feature type="chain" id="PRO_0000031717" description="Uncharacterized ABC transporter extracellular-binding protein PH1214">
    <location>
        <begin position="24"/>
        <end position="441"/>
    </location>
</feature>
<feature type="modified residue" description="N-acetylcysteine" evidence="1">
    <location>
        <position position="24"/>
    </location>
</feature>
<feature type="lipid moiety-binding region" description="S-archaeol cysteine" evidence="1">
    <location>
        <position position="24"/>
    </location>
</feature>
<gene>
    <name type="ordered locus">PH1214</name>
    <name type="ORF">PHBK040</name>
</gene>
<accession>O58969</accession>
<reference key="1">
    <citation type="journal article" date="1998" name="DNA Res.">
        <title>Complete sequence and gene organization of the genome of a hyper-thermophilic archaebacterium, Pyrococcus horikoshii OT3.</title>
        <authorList>
            <person name="Kawarabayasi Y."/>
            <person name="Sawada M."/>
            <person name="Horikawa H."/>
            <person name="Haikawa Y."/>
            <person name="Hino Y."/>
            <person name="Yamamoto S."/>
            <person name="Sekine M."/>
            <person name="Baba S."/>
            <person name="Kosugi H."/>
            <person name="Hosoyama A."/>
            <person name="Nagai Y."/>
            <person name="Sakai M."/>
            <person name="Ogura K."/>
            <person name="Otsuka R."/>
            <person name="Nakazawa H."/>
            <person name="Takamiya M."/>
            <person name="Ohfuku Y."/>
            <person name="Funahashi T."/>
            <person name="Tanaka T."/>
            <person name="Kudoh Y."/>
            <person name="Yamazaki J."/>
            <person name="Kushida N."/>
            <person name="Oguchi A."/>
            <person name="Aoki K."/>
            <person name="Yoshizawa T."/>
            <person name="Nakamura Y."/>
            <person name="Robb F.T."/>
            <person name="Horikoshi K."/>
            <person name="Masuchi Y."/>
            <person name="Shizuya H."/>
            <person name="Kikuchi H."/>
        </authorList>
    </citation>
    <scope>NUCLEOTIDE SEQUENCE [LARGE SCALE GENOMIC DNA]</scope>
    <source>
        <strain>ATCC 700860 / DSM 12428 / JCM 9974 / NBRC 100139 / OT-3</strain>
    </source>
</reference>
<comment type="function">
    <text>Probably part of a binding-protein-dependent transport system PH1214/15/16.</text>
</comment>
<comment type="subcellular location">
    <subcellularLocation>
        <location evidence="2">Cell membrane</location>
        <topology evidence="2">Lipid-anchor</topology>
    </subcellularLocation>
</comment>
<comment type="similarity">
    <text evidence="3">Belongs to the bacterial solute-binding protein 1 family.</text>
</comment>
<dbReference type="EMBL" id="BA000001">
    <property type="protein sequence ID" value="BAA30314.1"/>
    <property type="molecule type" value="Genomic_DNA"/>
</dbReference>
<dbReference type="PIR" id="H71064">
    <property type="entry name" value="H71064"/>
</dbReference>
<dbReference type="RefSeq" id="WP_010885301.1">
    <property type="nucleotide sequence ID" value="NC_000961.1"/>
</dbReference>
<dbReference type="SMR" id="O58969"/>
<dbReference type="STRING" id="70601.gene:9378176"/>
<dbReference type="EnsemblBacteria" id="BAA30314">
    <property type="protein sequence ID" value="BAA30314"/>
    <property type="gene ID" value="BAA30314"/>
</dbReference>
<dbReference type="GeneID" id="1443536"/>
<dbReference type="KEGG" id="pho:PH1214"/>
<dbReference type="eggNOG" id="arCOG00150">
    <property type="taxonomic scope" value="Archaea"/>
</dbReference>
<dbReference type="OrthoDB" id="18176at2157"/>
<dbReference type="Proteomes" id="UP000000752">
    <property type="component" value="Chromosome"/>
</dbReference>
<dbReference type="GO" id="GO:0005886">
    <property type="term" value="C:plasma membrane"/>
    <property type="evidence" value="ECO:0007669"/>
    <property type="project" value="UniProtKB-SubCell"/>
</dbReference>
<dbReference type="Gene3D" id="3.40.190.10">
    <property type="entry name" value="Periplasmic binding protein-like II"/>
    <property type="match status" value="2"/>
</dbReference>
<dbReference type="InterPro" id="IPR050490">
    <property type="entry name" value="Bact_solute-bd_prot1"/>
</dbReference>
<dbReference type="InterPro" id="IPR006059">
    <property type="entry name" value="SBP"/>
</dbReference>
<dbReference type="PANTHER" id="PTHR43649">
    <property type="entry name" value="ARABINOSE-BINDING PROTEIN-RELATED"/>
    <property type="match status" value="1"/>
</dbReference>
<dbReference type="PANTHER" id="PTHR43649:SF28">
    <property type="entry name" value="BINDING PROTEIN COMPONENT OF ABC SUGAR TRANSPORTER-RELATED"/>
    <property type="match status" value="1"/>
</dbReference>
<dbReference type="Pfam" id="PF01547">
    <property type="entry name" value="SBP_bac_1"/>
    <property type="match status" value="1"/>
</dbReference>
<dbReference type="SUPFAM" id="SSF53850">
    <property type="entry name" value="Periplasmic binding protein-like II"/>
    <property type="match status" value="1"/>
</dbReference>
<dbReference type="PROSITE" id="PS51257">
    <property type="entry name" value="PROKAR_LIPOPROTEIN"/>
    <property type="match status" value="1"/>
</dbReference>
<protein>
    <recommendedName>
        <fullName>Uncharacterized ABC transporter extracellular-binding protein PH1214</fullName>
    </recommendedName>
</protein>